<keyword id="KW-0963">Cytoplasm</keyword>
<keyword id="KW-0903">Direct protein sequencing</keyword>
<keyword id="KW-0484">Methanogenesis</keyword>
<keyword id="KW-1185">Reference proteome</keyword>
<keyword id="KW-0808">Transferase</keyword>
<reference key="1">
    <citation type="journal article" date="1994" name="J. Bacteriol.">
        <title>Growth phase-dependent transcription of the genes that encode the two methyl coenzyme M reductase isoenzymes and N5-methyltetrahydromethanopterin:coenzyme M methyltransferase in Methanobacterium thermoautotrophicum delta H.</title>
        <authorList>
            <person name="Pihl T.D."/>
            <person name="Sharma S."/>
            <person name="Reeve J.N."/>
        </authorList>
    </citation>
    <scope>NUCLEOTIDE SEQUENCE [GENOMIC DNA]</scope>
    <source>
        <strain>ATCC 29096 / DSM 1053 / JCM 10044 / NBRC 100330 / Delta H</strain>
    </source>
</reference>
<reference key="2">
    <citation type="journal article" date="1997" name="J. Bacteriol.">
        <title>Complete genome sequence of Methanobacterium thermoautotrophicum deltaH: functional analysis and comparative genomics.</title>
        <authorList>
            <person name="Smith D.R."/>
            <person name="Doucette-Stamm L.A."/>
            <person name="Deloughery C."/>
            <person name="Lee H.-M."/>
            <person name="Dubois J."/>
            <person name="Aldredge T."/>
            <person name="Bashirzadeh R."/>
            <person name="Blakely D."/>
            <person name="Cook R."/>
            <person name="Gilbert K."/>
            <person name="Harrison D."/>
            <person name="Hoang L."/>
            <person name="Keagle P."/>
            <person name="Lumm W."/>
            <person name="Pothier B."/>
            <person name="Qiu D."/>
            <person name="Spadafora R."/>
            <person name="Vicare R."/>
            <person name="Wang Y."/>
            <person name="Wierzbowski J."/>
            <person name="Gibson R."/>
            <person name="Jiwani N."/>
            <person name="Caruso A."/>
            <person name="Bush D."/>
            <person name="Safer H."/>
            <person name="Patwell D."/>
            <person name="Prabhakar S."/>
            <person name="McDougall S."/>
            <person name="Shimer G."/>
            <person name="Goyal A."/>
            <person name="Pietrovski S."/>
            <person name="Church G.M."/>
            <person name="Daniels C.J."/>
            <person name="Mao J.-I."/>
            <person name="Rice P."/>
            <person name="Noelling J."/>
            <person name="Reeve J.N."/>
        </authorList>
    </citation>
    <scope>NUCLEOTIDE SEQUENCE [LARGE SCALE GENOMIC DNA]</scope>
    <source>
        <strain>ATCC 29096 / DSM 1053 / JCM 10044 / NBRC 100330 / Delta H</strain>
    </source>
</reference>
<reference key="3">
    <citation type="journal article" date="1990" name="Eur. J. Biochem.">
        <title>Two genetically distinct methyl-coenzyme M reductases in Methanobacterium thermoautotrophicum strain Marburg and delta H.</title>
        <authorList>
            <person name="Rospert S."/>
            <person name="Linder D."/>
            <person name="Ellermann J."/>
            <person name="Thauer R.K."/>
        </authorList>
    </citation>
    <scope>PROTEIN SEQUENCE OF 2-21</scope>
    <scope>FUNCTION</scope>
    <scope>CATALYTIC ACTIVITY</scope>
    <scope>SUBUNIT</scope>
    <source>
        <strain>ATCC 29096 / DSM 1053 / JCM 10044 / NBRC 100330 / Delta H</strain>
    </source>
</reference>
<reference key="4">
    <citation type="journal article" date="1987" name="Biochem. Biophys. Res. Commun.">
        <title>Evidence that the heterodisulfide of coenzyme M and 7-mercaptoheptanoylthreonine phosphate is a product of the methylreductase reaction in Methanobacterium.</title>
        <authorList>
            <person name="Bobik T.A."/>
            <person name="Olson K.D."/>
            <person name="Noll K.M."/>
            <person name="Wolfe R.S."/>
        </authorList>
    </citation>
    <scope>FUNCTION</scope>
    <scope>CATALYTIC ACTIVITY</scope>
    <source>
        <strain>ATCC 29096 / DSM 1053 / JCM 10044 / NBRC 100330 / Delta H</strain>
    </source>
</reference>
<organism>
    <name type="scientific">Methanothermobacter thermautotrophicus (strain ATCC 29096 / DSM 1053 / JCM 10044 / NBRC 100330 / Delta H)</name>
    <name type="common">Methanobacterium thermoautotrophicum</name>
    <dbReference type="NCBI Taxonomy" id="187420"/>
    <lineage>
        <taxon>Archaea</taxon>
        <taxon>Methanobacteriati</taxon>
        <taxon>Methanobacteriota</taxon>
        <taxon>Methanomada group</taxon>
        <taxon>Methanobacteria</taxon>
        <taxon>Methanobacteriales</taxon>
        <taxon>Methanobacteriaceae</taxon>
        <taxon>Methanothermobacter</taxon>
    </lineage>
</organism>
<protein>
    <recommendedName>
        <fullName evidence="4">Methyl-coenzyme M reductase I subunit beta</fullName>
        <shortName evidence="4">MCR I beta</shortName>
        <ecNumber evidence="2 3">2.8.4.1</ecNumber>
    </recommendedName>
    <alternativeName>
        <fullName>Coenzyme-B sulfoethylthiotransferase beta</fullName>
    </alternativeName>
</protein>
<evidence type="ECO:0000250" key="1">
    <source>
        <dbReference type="UniProtKB" id="P11560"/>
    </source>
</evidence>
<evidence type="ECO:0000269" key="2">
    <source>
    </source>
</evidence>
<evidence type="ECO:0000269" key="3">
    <source>
    </source>
</evidence>
<evidence type="ECO:0000303" key="4">
    <source>
    </source>
</evidence>
<evidence type="ECO:0000305" key="5"/>
<evidence type="ECO:0000305" key="6">
    <source>
    </source>
</evidence>
<accession>O27236</accession>
<accession>Q50489</accession>
<gene>
    <name type="primary">mcrB</name>
    <name type="ordered locus">MTH_1168</name>
</gene>
<comment type="function">
    <text evidence="2 3">Component of the methyl-coenzyme M reductase (MCR) I that catalyzes the reductive cleavage of methyl-coenzyme M (CoM-S-CH3 or 2-(methylthio)ethanesulfonate) using coenzyme B (CoB or 7-mercaptoheptanoylthreonine phosphate) as reductant which results in the production of methane and the mixed heterodisulfide of CoB and CoM (CoM-S-S-CoB). This is the final step in methanogenesis.</text>
</comment>
<comment type="catalytic activity">
    <reaction evidence="2 3">
        <text>coenzyme B + methyl-coenzyme M = methane + coenzyme M-coenzyme B heterodisulfide</text>
        <dbReference type="Rhea" id="RHEA:12532"/>
        <dbReference type="ChEBI" id="CHEBI:16183"/>
        <dbReference type="ChEBI" id="CHEBI:58286"/>
        <dbReference type="ChEBI" id="CHEBI:58411"/>
        <dbReference type="ChEBI" id="CHEBI:58596"/>
        <dbReference type="EC" id="2.8.4.1"/>
    </reaction>
    <physiologicalReaction direction="left-to-right" evidence="6">
        <dbReference type="Rhea" id="RHEA:12533"/>
    </physiologicalReaction>
</comment>
<comment type="cofactor">
    <cofactor evidence="1">
        <name>coenzyme F430</name>
        <dbReference type="ChEBI" id="CHEBI:60540"/>
    </cofactor>
    <text evidence="1">Binds 2 coenzyme F430 non-covalently per MCR complex. Coenzyme F430 is a yellow nickel porphinoid. Methyl-coenzyme-M reductase is activated when the enzyme-bound coenzyme F430 is reduced to the Ni(I) oxidation state.</text>
</comment>
<comment type="pathway">
    <text evidence="6">One-carbon metabolism; methyl-coenzyme M reduction; methane from methyl-coenzyme M: step 1/1.</text>
</comment>
<comment type="subunit">
    <text evidence="2">MCR is a hexamer of two alpha, two beta, and two gamma chains, forming a dimer of heterotrimers.</text>
</comment>
<comment type="subcellular location">
    <subcellularLocation>
        <location evidence="1">Cytoplasm</location>
    </subcellularLocation>
</comment>
<comment type="developmental stage">
    <text evidence="1">There are two MCR complexes in this bacteria. MCR II is expressed in the early growth phase. Late growth cells contain mostly MCR I.</text>
</comment>
<comment type="similarity">
    <text evidence="5">Belongs to the methyl-coenzyme M reductase beta subunit family.</text>
</comment>
<comment type="sequence caution" evidence="5">
    <conflict type="erroneous initiation">
        <sequence resource="EMBL-CDS" id="AAB85657"/>
    </conflict>
</comment>
<proteinExistence type="evidence at protein level"/>
<feature type="initiator methionine" description="Removed" evidence="2">
    <location>
        <position position="1"/>
    </location>
</feature>
<feature type="chain" id="PRO_0000147467" description="Methyl-coenzyme M reductase I subunit beta">
    <location>
        <begin position="2"/>
        <end position="443"/>
    </location>
</feature>
<feature type="binding site" evidence="1">
    <location>
        <position position="367"/>
    </location>
    <ligand>
        <name>coenzyme M</name>
        <dbReference type="ChEBI" id="CHEBI:58319"/>
    </ligand>
</feature>
<feature type="binding site" evidence="1">
    <location>
        <position position="369"/>
    </location>
    <ligand>
        <name>coenzyme B</name>
        <dbReference type="ChEBI" id="CHEBI:58596"/>
    </ligand>
</feature>
<feature type="sequence conflict" description="In Ref. 1; AAA73441." evidence="5" ref="1">
    <original>A</original>
    <variation>C</variation>
    <location>
        <position position="82"/>
    </location>
</feature>
<sequence>MAKFEDKVDLYDDRGNLVEEQVPLEALSPLRNPAIKSIVQGIKRTVAVNLEGIENALKTAKVGGPACKIMGRELDLDIVGNAESIAAAAKEMIQVTEDDDTKVELLGGGKRALVQVPSARFDVAAEYSAAPLVTATAFVQAIINEFDVSMYDANMVKAAVLGRYPQSVEYMGANIATMLDIPQKLEGPGYALRNIMVNHVVAATLKNTLQAAALSTILEQTAMFEMGDAVGAFERMHLLGLAYQGMNADNLVFDLVKANGKEGTVGSVIADLVERALEDGVIKVEKELTDYKVYGTDDLAMWNAYAAAGLMAATMVNQGAARAAQGVSSTLLYYNDLIEFETGLPGVDFGKVEGTAVGFSFFSHSIYGGGGPGIFNGNHIVTRHSKGFAIPCVAAAMALDAGTQMFSPEATSGLIKEVFSQVDEFREPLKYVVEAAAEIKNEI</sequence>
<name>MCRB_METTH</name>
<dbReference type="EC" id="2.8.4.1" evidence="2 3"/>
<dbReference type="EMBL" id="U10036">
    <property type="protein sequence ID" value="AAA73441.1"/>
    <property type="molecule type" value="Genomic_DNA"/>
</dbReference>
<dbReference type="EMBL" id="AE000666">
    <property type="protein sequence ID" value="AAB85657.1"/>
    <property type="status" value="ALT_INIT"/>
    <property type="molecule type" value="Genomic_DNA"/>
</dbReference>
<dbReference type="PIR" id="F69022">
    <property type="entry name" value="F69022"/>
</dbReference>
<dbReference type="RefSeq" id="WP_048061283.1">
    <property type="nucleotide sequence ID" value="NC_000916.1"/>
</dbReference>
<dbReference type="SMR" id="O27236"/>
<dbReference type="FunCoup" id="O27236">
    <property type="interactions" value="67"/>
</dbReference>
<dbReference type="IntAct" id="O27236">
    <property type="interactions" value="1"/>
</dbReference>
<dbReference type="STRING" id="187420.MTH_1168"/>
<dbReference type="PaxDb" id="187420-MTH_1168"/>
<dbReference type="EnsemblBacteria" id="AAB85657">
    <property type="protein sequence ID" value="AAB85657"/>
    <property type="gene ID" value="MTH_1168"/>
</dbReference>
<dbReference type="GeneID" id="77401697"/>
<dbReference type="KEGG" id="mth:MTH_1168"/>
<dbReference type="PATRIC" id="fig|187420.15.peg.1145"/>
<dbReference type="HOGENOM" id="CLU_617682_0_0_2"/>
<dbReference type="InParanoid" id="O27236"/>
<dbReference type="BioCyc" id="MetaCyc:MCRBMAUTO-MONOMER"/>
<dbReference type="UniPathway" id="UPA00646">
    <property type="reaction ID" value="UER00699"/>
</dbReference>
<dbReference type="Proteomes" id="UP000005223">
    <property type="component" value="Chromosome"/>
</dbReference>
<dbReference type="GO" id="GO:0005737">
    <property type="term" value="C:cytoplasm"/>
    <property type="evidence" value="ECO:0007669"/>
    <property type="project" value="UniProtKB-SubCell"/>
</dbReference>
<dbReference type="GO" id="GO:0050524">
    <property type="term" value="F:coenzyme-B sulfoethylthiotransferase activity"/>
    <property type="evidence" value="ECO:0007669"/>
    <property type="project" value="UniProtKB-EC"/>
</dbReference>
<dbReference type="GO" id="GO:0015948">
    <property type="term" value="P:methanogenesis"/>
    <property type="evidence" value="ECO:0007669"/>
    <property type="project" value="UniProtKB-KW"/>
</dbReference>
<dbReference type="Gene3D" id="3.30.70.470">
    <property type="match status" value="1"/>
</dbReference>
<dbReference type="Gene3D" id="1.20.840.10">
    <property type="entry name" value="Methyl-coenzyme M reductase, alpha/beta subunit, C-terminal"/>
    <property type="match status" value="1"/>
</dbReference>
<dbReference type="InterPro" id="IPR008924">
    <property type="entry name" value="Me_CoM_Rdtase_asu/bsu_C"/>
</dbReference>
<dbReference type="InterPro" id="IPR015823">
    <property type="entry name" value="Me_CoM_Rdtase_asu_N_sub2"/>
</dbReference>
<dbReference type="InterPro" id="IPR003179">
    <property type="entry name" value="Me_CoM_Rdtase_bsu"/>
</dbReference>
<dbReference type="InterPro" id="IPR022679">
    <property type="entry name" value="Me_CoM_Rdtase_bsu_C"/>
</dbReference>
<dbReference type="InterPro" id="IPR022680">
    <property type="entry name" value="Me_CoM_Rdtase_bsu_N"/>
</dbReference>
<dbReference type="InterPro" id="IPR009024">
    <property type="entry name" value="Me_CoM_Rdtase_Fd-like_fold"/>
</dbReference>
<dbReference type="NCBIfam" id="TIGR03257">
    <property type="entry name" value="met_CoM_red_bet"/>
    <property type="match status" value="1"/>
</dbReference>
<dbReference type="Pfam" id="PF02241">
    <property type="entry name" value="MCR_beta"/>
    <property type="match status" value="1"/>
</dbReference>
<dbReference type="Pfam" id="PF02783">
    <property type="entry name" value="MCR_beta_N"/>
    <property type="match status" value="1"/>
</dbReference>
<dbReference type="PIRSF" id="PIRSF000263">
    <property type="entry name" value="Meth_CoM_rd_beta"/>
    <property type="match status" value="1"/>
</dbReference>
<dbReference type="SUPFAM" id="SSF48081">
    <property type="entry name" value="Methyl-coenzyme M reductase alpha and beta chain C-terminal domain"/>
    <property type="match status" value="1"/>
</dbReference>
<dbReference type="SUPFAM" id="SSF55088">
    <property type="entry name" value="Methyl-coenzyme M reductase subunits"/>
    <property type="match status" value="1"/>
</dbReference>